<name>RL17_PSEPK</name>
<accession>Q88QL0</accession>
<dbReference type="EMBL" id="AE015451">
    <property type="protein sequence ID" value="AAN66110.1"/>
    <property type="molecule type" value="Genomic_DNA"/>
</dbReference>
<dbReference type="RefSeq" id="NP_742646.1">
    <property type="nucleotide sequence ID" value="NC_002947.4"/>
</dbReference>
<dbReference type="RefSeq" id="WP_003255451.1">
    <property type="nucleotide sequence ID" value="NZ_CP169744.1"/>
</dbReference>
<dbReference type="SMR" id="Q88QL0"/>
<dbReference type="STRING" id="160488.PP_0480"/>
<dbReference type="PaxDb" id="160488-PP_0480"/>
<dbReference type="GeneID" id="97166005"/>
<dbReference type="KEGG" id="ppu:PP_0480"/>
<dbReference type="PATRIC" id="fig|160488.4.peg.512"/>
<dbReference type="eggNOG" id="COG0203">
    <property type="taxonomic scope" value="Bacteria"/>
</dbReference>
<dbReference type="HOGENOM" id="CLU_074407_2_0_6"/>
<dbReference type="OrthoDB" id="9809073at2"/>
<dbReference type="PhylomeDB" id="Q88QL0"/>
<dbReference type="BioCyc" id="PPUT160488:G1G01-527-MONOMER"/>
<dbReference type="Proteomes" id="UP000000556">
    <property type="component" value="Chromosome"/>
</dbReference>
<dbReference type="GO" id="GO:0022625">
    <property type="term" value="C:cytosolic large ribosomal subunit"/>
    <property type="evidence" value="ECO:0007669"/>
    <property type="project" value="TreeGrafter"/>
</dbReference>
<dbReference type="GO" id="GO:0003735">
    <property type="term" value="F:structural constituent of ribosome"/>
    <property type="evidence" value="ECO:0007669"/>
    <property type="project" value="InterPro"/>
</dbReference>
<dbReference type="GO" id="GO:0006412">
    <property type="term" value="P:translation"/>
    <property type="evidence" value="ECO:0007669"/>
    <property type="project" value="UniProtKB-UniRule"/>
</dbReference>
<dbReference type="FunFam" id="3.90.1030.10:FF:000001">
    <property type="entry name" value="50S ribosomal protein L17"/>
    <property type="match status" value="1"/>
</dbReference>
<dbReference type="Gene3D" id="3.90.1030.10">
    <property type="entry name" value="Ribosomal protein L17"/>
    <property type="match status" value="1"/>
</dbReference>
<dbReference type="HAMAP" id="MF_01368">
    <property type="entry name" value="Ribosomal_bL17"/>
    <property type="match status" value="1"/>
</dbReference>
<dbReference type="InterPro" id="IPR000456">
    <property type="entry name" value="Ribosomal_bL17"/>
</dbReference>
<dbReference type="InterPro" id="IPR047859">
    <property type="entry name" value="Ribosomal_bL17_CS"/>
</dbReference>
<dbReference type="InterPro" id="IPR036373">
    <property type="entry name" value="Ribosomal_bL17_sf"/>
</dbReference>
<dbReference type="NCBIfam" id="TIGR00059">
    <property type="entry name" value="L17"/>
    <property type="match status" value="1"/>
</dbReference>
<dbReference type="PANTHER" id="PTHR14413:SF16">
    <property type="entry name" value="LARGE RIBOSOMAL SUBUNIT PROTEIN BL17M"/>
    <property type="match status" value="1"/>
</dbReference>
<dbReference type="PANTHER" id="PTHR14413">
    <property type="entry name" value="RIBOSOMAL PROTEIN L17"/>
    <property type="match status" value="1"/>
</dbReference>
<dbReference type="Pfam" id="PF01196">
    <property type="entry name" value="Ribosomal_L17"/>
    <property type="match status" value="1"/>
</dbReference>
<dbReference type="SUPFAM" id="SSF64263">
    <property type="entry name" value="Prokaryotic ribosomal protein L17"/>
    <property type="match status" value="1"/>
</dbReference>
<dbReference type="PROSITE" id="PS01167">
    <property type="entry name" value="RIBOSOMAL_L17"/>
    <property type="match status" value="1"/>
</dbReference>
<organism>
    <name type="scientific">Pseudomonas putida (strain ATCC 47054 / DSM 6125 / CFBP 8728 / NCIMB 11950 / KT2440)</name>
    <dbReference type="NCBI Taxonomy" id="160488"/>
    <lineage>
        <taxon>Bacteria</taxon>
        <taxon>Pseudomonadati</taxon>
        <taxon>Pseudomonadota</taxon>
        <taxon>Gammaproteobacteria</taxon>
        <taxon>Pseudomonadales</taxon>
        <taxon>Pseudomonadaceae</taxon>
        <taxon>Pseudomonas</taxon>
    </lineage>
</organism>
<reference key="1">
    <citation type="journal article" date="2002" name="Environ. Microbiol.">
        <title>Complete genome sequence and comparative analysis of the metabolically versatile Pseudomonas putida KT2440.</title>
        <authorList>
            <person name="Nelson K.E."/>
            <person name="Weinel C."/>
            <person name="Paulsen I.T."/>
            <person name="Dodson R.J."/>
            <person name="Hilbert H."/>
            <person name="Martins dos Santos V.A.P."/>
            <person name="Fouts D.E."/>
            <person name="Gill S.R."/>
            <person name="Pop M."/>
            <person name="Holmes M."/>
            <person name="Brinkac L.M."/>
            <person name="Beanan M.J."/>
            <person name="DeBoy R.T."/>
            <person name="Daugherty S.C."/>
            <person name="Kolonay J.F."/>
            <person name="Madupu R."/>
            <person name="Nelson W.C."/>
            <person name="White O."/>
            <person name="Peterson J.D."/>
            <person name="Khouri H.M."/>
            <person name="Hance I."/>
            <person name="Chris Lee P."/>
            <person name="Holtzapple E.K."/>
            <person name="Scanlan D."/>
            <person name="Tran K."/>
            <person name="Moazzez A."/>
            <person name="Utterback T.R."/>
            <person name="Rizzo M."/>
            <person name="Lee K."/>
            <person name="Kosack D."/>
            <person name="Moestl D."/>
            <person name="Wedler H."/>
            <person name="Lauber J."/>
            <person name="Stjepandic D."/>
            <person name="Hoheisel J."/>
            <person name="Straetz M."/>
            <person name="Heim S."/>
            <person name="Kiewitz C."/>
            <person name="Eisen J.A."/>
            <person name="Timmis K.N."/>
            <person name="Duesterhoeft A."/>
            <person name="Tuemmler B."/>
            <person name="Fraser C.M."/>
        </authorList>
    </citation>
    <scope>NUCLEOTIDE SEQUENCE [LARGE SCALE GENOMIC DNA]</scope>
    <source>
        <strain>ATCC 47054 / DSM 6125 / CFBP 8728 / NCIMB 11950 / KT2440</strain>
    </source>
</reference>
<keyword id="KW-1185">Reference proteome</keyword>
<keyword id="KW-0687">Ribonucleoprotein</keyword>
<keyword id="KW-0689">Ribosomal protein</keyword>
<protein>
    <recommendedName>
        <fullName evidence="1">Large ribosomal subunit protein bL17</fullName>
    </recommendedName>
    <alternativeName>
        <fullName evidence="2">50S ribosomal protein L17</fullName>
    </alternativeName>
</protein>
<gene>
    <name evidence="1" type="primary">rplQ</name>
    <name type="ordered locus">PP_0480</name>
</gene>
<proteinExistence type="inferred from homology"/>
<feature type="chain" id="PRO_0000267916" description="Large ribosomal subunit protein bL17">
    <location>
        <begin position="1"/>
        <end position="128"/>
    </location>
</feature>
<comment type="subunit">
    <text evidence="1">Part of the 50S ribosomal subunit. Contacts protein L32.</text>
</comment>
<comment type="similarity">
    <text evidence="1">Belongs to the bacterial ribosomal protein bL17 family.</text>
</comment>
<sequence length="128" mass="14363">MRHRKSGRHLSRTSSHRKAMFQNMAVSLIEHELIKTTLPKAKELRRVAEPLITLAKEDSVANRRLAFDRTRSKSAVGKLFNDLGKRYATRQGGYLRILKCGFRAGDNAPMAYVELVDRPVGGAVEAAE</sequence>
<evidence type="ECO:0000255" key="1">
    <source>
        <dbReference type="HAMAP-Rule" id="MF_01368"/>
    </source>
</evidence>
<evidence type="ECO:0000305" key="2"/>